<sequence>MNLKLHIKTYGCQMNQYDSSKIVDLLKNTHKYQLTDIAEEADILLLNTCSIREKAQEKLFHQLGRWRRLKKINPNLIIGVGGCVASQEGSNIRERANYVDIIFGPQTLHRLPEMINHVRITRSPVIDISFPEIEKFDCMPKPQAKGPTAFVSIIEGCDKYCSYCVVPYTRGIEVSRPCEDILLEINNLADQNVREIHLLGQNVNAYRGTRYGGGTCTFAELLRLVAAINGIDRIRFTTSHPIEFTDDLIDVYRDTPELVSFVHLPVQSGSDRILALMKRGHTVLEYKSIIRKLYAVRPSIQISSDFIVGFPGETEEDFRQTMNLISEVNFDMSFSFIYSPRPGTPAANMVDIVSQDEKKQRLYILQECIRKQAMKFSQAMKGTVQCILVEGTSRKNIMHLSGRTENNRVVNFIGNNGMIGQFVNVEIIDVYSNSLRGELISNQEKKYTLSA</sequence>
<reference key="1">
    <citation type="journal article" date="2006" name="PLoS Biol.">
        <title>Metabolic complementarity and genomics of the dual bacterial symbiosis of sharpshooters.</title>
        <authorList>
            <person name="Wu D."/>
            <person name="Daugherty S.C."/>
            <person name="Van Aken S.E."/>
            <person name="Pai G.H."/>
            <person name="Watkins K.L."/>
            <person name="Khouri H."/>
            <person name="Tallon L.J."/>
            <person name="Zaborsky J.M."/>
            <person name="Dunbar H.E."/>
            <person name="Tran P.L."/>
            <person name="Moran N.A."/>
            <person name="Eisen J.A."/>
        </authorList>
    </citation>
    <scope>NUCLEOTIDE SEQUENCE [LARGE SCALE GENOMIC DNA]</scope>
</reference>
<feature type="chain" id="PRO_0000374148" description="tRNA-2-methylthio-N(6)-dimethylallyladenosine synthase">
    <location>
        <begin position="1"/>
        <end position="451"/>
    </location>
</feature>
<feature type="domain" description="MTTase N-terminal" evidence="1">
    <location>
        <begin position="3"/>
        <end position="120"/>
    </location>
</feature>
<feature type="domain" description="Radical SAM core" evidence="2">
    <location>
        <begin position="143"/>
        <end position="375"/>
    </location>
</feature>
<feature type="domain" description="TRAM" evidence="1">
    <location>
        <begin position="378"/>
        <end position="441"/>
    </location>
</feature>
<feature type="binding site" evidence="1">
    <location>
        <position position="12"/>
    </location>
    <ligand>
        <name>[4Fe-4S] cluster</name>
        <dbReference type="ChEBI" id="CHEBI:49883"/>
        <label>1</label>
    </ligand>
</feature>
<feature type="binding site" evidence="1">
    <location>
        <position position="49"/>
    </location>
    <ligand>
        <name>[4Fe-4S] cluster</name>
        <dbReference type="ChEBI" id="CHEBI:49883"/>
        <label>1</label>
    </ligand>
</feature>
<feature type="binding site" evidence="1">
    <location>
        <position position="83"/>
    </location>
    <ligand>
        <name>[4Fe-4S] cluster</name>
        <dbReference type="ChEBI" id="CHEBI:49883"/>
        <label>1</label>
    </ligand>
</feature>
<feature type="binding site" evidence="1">
    <location>
        <position position="157"/>
    </location>
    <ligand>
        <name>[4Fe-4S] cluster</name>
        <dbReference type="ChEBI" id="CHEBI:49883"/>
        <label>2</label>
        <note>4Fe-4S-S-AdoMet</note>
    </ligand>
</feature>
<feature type="binding site" evidence="1">
    <location>
        <position position="161"/>
    </location>
    <ligand>
        <name>[4Fe-4S] cluster</name>
        <dbReference type="ChEBI" id="CHEBI:49883"/>
        <label>2</label>
        <note>4Fe-4S-S-AdoMet</note>
    </ligand>
</feature>
<feature type="binding site" evidence="1">
    <location>
        <position position="164"/>
    </location>
    <ligand>
        <name>[4Fe-4S] cluster</name>
        <dbReference type="ChEBI" id="CHEBI:49883"/>
        <label>2</label>
        <note>4Fe-4S-S-AdoMet</note>
    </ligand>
</feature>
<proteinExistence type="inferred from homology"/>
<comment type="function">
    <text evidence="1">Catalyzes the methylthiolation of N6-(dimethylallyl)adenosine (i(6)A), leading to the formation of 2-methylthio-N6-(dimethylallyl)adenosine (ms(2)i(6)A) at position 37 in tRNAs that read codons beginning with uridine.</text>
</comment>
<comment type="catalytic activity">
    <reaction evidence="1">
        <text>N(6)-dimethylallyladenosine(37) in tRNA + (sulfur carrier)-SH + AH2 + 2 S-adenosyl-L-methionine = 2-methylsulfanyl-N(6)-dimethylallyladenosine(37) in tRNA + (sulfur carrier)-H + 5'-deoxyadenosine + L-methionine + A + S-adenosyl-L-homocysteine + 2 H(+)</text>
        <dbReference type="Rhea" id="RHEA:37067"/>
        <dbReference type="Rhea" id="RHEA-COMP:10375"/>
        <dbReference type="Rhea" id="RHEA-COMP:10376"/>
        <dbReference type="Rhea" id="RHEA-COMP:14737"/>
        <dbReference type="Rhea" id="RHEA-COMP:14739"/>
        <dbReference type="ChEBI" id="CHEBI:13193"/>
        <dbReference type="ChEBI" id="CHEBI:15378"/>
        <dbReference type="ChEBI" id="CHEBI:17319"/>
        <dbReference type="ChEBI" id="CHEBI:17499"/>
        <dbReference type="ChEBI" id="CHEBI:29917"/>
        <dbReference type="ChEBI" id="CHEBI:57844"/>
        <dbReference type="ChEBI" id="CHEBI:57856"/>
        <dbReference type="ChEBI" id="CHEBI:59789"/>
        <dbReference type="ChEBI" id="CHEBI:64428"/>
        <dbReference type="ChEBI" id="CHEBI:74415"/>
        <dbReference type="ChEBI" id="CHEBI:74417"/>
        <dbReference type="EC" id="2.8.4.3"/>
    </reaction>
</comment>
<comment type="cofactor">
    <cofactor evidence="1">
        <name>[4Fe-4S] cluster</name>
        <dbReference type="ChEBI" id="CHEBI:49883"/>
    </cofactor>
    <text evidence="1">Binds 2 [4Fe-4S] clusters. One cluster is coordinated with 3 cysteines and an exchangeable S-adenosyl-L-methionine.</text>
</comment>
<comment type="subunit">
    <text evidence="1">Monomer.</text>
</comment>
<comment type="subcellular location">
    <subcellularLocation>
        <location evidence="1">Cytoplasm</location>
    </subcellularLocation>
</comment>
<comment type="similarity">
    <text evidence="1">Belongs to the methylthiotransferase family. MiaB subfamily.</text>
</comment>
<name>MIAB_BAUCH</name>
<keyword id="KW-0004">4Fe-4S</keyword>
<keyword id="KW-0963">Cytoplasm</keyword>
<keyword id="KW-0408">Iron</keyword>
<keyword id="KW-0411">Iron-sulfur</keyword>
<keyword id="KW-0479">Metal-binding</keyword>
<keyword id="KW-1185">Reference proteome</keyword>
<keyword id="KW-0949">S-adenosyl-L-methionine</keyword>
<keyword id="KW-0808">Transferase</keyword>
<keyword id="KW-0819">tRNA processing</keyword>
<gene>
    <name evidence="1" type="primary">miaB</name>
    <name type="ordered locus">BCI_0065</name>
</gene>
<accession>Q1LU21</accession>
<protein>
    <recommendedName>
        <fullName evidence="1">tRNA-2-methylthio-N(6)-dimethylallyladenosine synthase</fullName>
        <ecNumber evidence="1">2.8.4.3</ecNumber>
    </recommendedName>
    <alternativeName>
        <fullName evidence="1">(Dimethylallyl)adenosine tRNA methylthiotransferase MiaB</fullName>
    </alternativeName>
    <alternativeName>
        <fullName evidence="1">tRNA-i(6)A37 methylthiotransferase</fullName>
    </alternativeName>
</protein>
<evidence type="ECO:0000255" key="1">
    <source>
        <dbReference type="HAMAP-Rule" id="MF_01864"/>
    </source>
</evidence>
<evidence type="ECO:0000255" key="2">
    <source>
        <dbReference type="PROSITE-ProRule" id="PRU01266"/>
    </source>
</evidence>
<organism>
    <name type="scientific">Baumannia cicadellinicola subsp. Homalodisca coagulata</name>
    <dbReference type="NCBI Taxonomy" id="374463"/>
    <lineage>
        <taxon>Bacteria</taxon>
        <taxon>Pseudomonadati</taxon>
        <taxon>Pseudomonadota</taxon>
        <taxon>Gammaproteobacteria</taxon>
        <taxon>Candidatus Palibaumannia</taxon>
    </lineage>
</organism>
<dbReference type="EC" id="2.8.4.3" evidence="1"/>
<dbReference type="EMBL" id="CP000238">
    <property type="protein sequence ID" value="ABF13819.1"/>
    <property type="molecule type" value="Genomic_DNA"/>
</dbReference>
<dbReference type="RefSeq" id="WP_011520276.1">
    <property type="nucleotide sequence ID" value="NC_007984.1"/>
</dbReference>
<dbReference type="SMR" id="Q1LU21"/>
<dbReference type="STRING" id="374463.BCI_0065"/>
<dbReference type="KEGG" id="bci:BCI_0065"/>
<dbReference type="HOGENOM" id="CLU_018697_2_0_6"/>
<dbReference type="OrthoDB" id="9805215at2"/>
<dbReference type="Proteomes" id="UP000002427">
    <property type="component" value="Chromosome"/>
</dbReference>
<dbReference type="GO" id="GO:0005829">
    <property type="term" value="C:cytosol"/>
    <property type="evidence" value="ECO:0007669"/>
    <property type="project" value="TreeGrafter"/>
</dbReference>
<dbReference type="GO" id="GO:0051539">
    <property type="term" value="F:4 iron, 4 sulfur cluster binding"/>
    <property type="evidence" value="ECO:0007669"/>
    <property type="project" value="UniProtKB-UniRule"/>
</dbReference>
<dbReference type="GO" id="GO:0046872">
    <property type="term" value="F:metal ion binding"/>
    <property type="evidence" value="ECO:0007669"/>
    <property type="project" value="UniProtKB-KW"/>
</dbReference>
<dbReference type="GO" id="GO:0035597">
    <property type="term" value="F:N6-isopentenyladenosine methylthiotransferase activity"/>
    <property type="evidence" value="ECO:0007669"/>
    <property type="project" value="TreeGrafter"/>
</dbReference>
<dbReference type="CDD" id="cd01335">
    <property type="entry name" value="Radical_SAM"/>
    <property type="match status" value="1"/>
</dbReference>
<dbReference type="FunFam" id="3.40.50.12160:FF:000001">
    <property type="entry name" value="tRNA-2-methylthio-N(6)-dimethylallyladenosine synthase"/>
    <property type="match status" value="1"/>
</dbReference>
<dbReference type="FunFam" id="3.80.30.20:FF:000001">
    <property type="entry name" value="tRNA-2-methylthio-N(6)-dimethylallyladenosine synthase 2"/>
    <property type="match status" value="1"/>
</dbReference>
<dbReference type="Gene3D" id="3.40.50.12160">
    <property type="entry name" value="Methylthiotransferase, N-terminal domain"/>
    <property type="match status" value="1"/>
</dbReference>
<dbReference type="Gene3D" id="3.80.30.20">
    <property type="entry name" value="tm_1862 like domain"/>
    <property type="match status" value="1"/>
</dbReference>
<dbReference type="HAMAP" id="MF_01864">
    <property type="entry name" value="tRNA_metthiotr_MiaB"/>
    <property type="match status" value="1"/>
</dbReference>
<dbReference type="InterPro" id="IPR006638">
    <property type="entry name" value="Elp3/MiaA/NifB-like_rSAM"/>
</dbReference>
<dbReference type="InterPro" id="IPR005839">
    <property type="entry name" value="Methylthiotransferase"/>
</dbReference>
<dbReference type="InterPro" id="IPR020612">
    <property type="entry name" value="Methylthiotransferase_CS"/>
</dbReference>
<dbReference type="InterPro" id="IPR013848">
    <property type="entry name" value="Methylthiotransferase_N"/>
</dbReference>
<dbReference type="InterPro" id="IPR038135">
    <property type="entry name" value="Methylthiotransferase_N_sf"/>
</dbReference>
<dbReference type="InterPro" id="IPR006463">
    <property type="entry name" value="MiaB_methiolase"/>
</dbReference>
<dbReference type="InterPro" id="IPR007197">
    <property type="entry name" value="rSAM"/>
</dbReference>
<dbReference type="InterPro" id="IPR023404">
    <property type="entry name" value="rSAM_horseshoe"/>
</dbReference>
<dbReference type="InterPro" id="IPR002792">
    <property type="entry name" value="TRAM_dom"/>
</dbReference>
<dbReference type="NCBIfam" id="TIGR01574">
    <property type="entry name" value="miaB-methiolase"/>
    <property type="match status" value="1"/>
</dbReference>
<dbReference type="NCBIfam" id="TIGR00089">
    <property type="entry name" value="MiaB/RimO family radical SAM methylthiotransferase"/>
    <property type="match status" value="1"/>
</dbReference>
<dbReference type="PANTHER" id="PTHR43020">
    <property type="entry name" value="CDK5 REGULATORY SUBUNIT-ASSOCIATED PROTEIN 1"/>
    <property type="match status" value="1"/>
</dbReference>
<dbReference type="PANTHER" id="PTHR43020:SF2">
    <property type="entry name" value="MITOCHONDRIAL TRNA METHYLTHIOTRANSFERASE CDK5RAP1"/>
    <property type="match status" value="1"/>
</dbReference>
<dbReference type="Pfam" id="PF04055">
    <property type="entry name" value="Radical_SAM"/>
    <property type="match status" value="1"/>
</dbReference>
<dbReference type="Pfam" id="PF01938">
    <property type="entry name" value="TRAM"/>
    <property type="match status" value="1"/>
</dbReference>
<dbReference type="Pfam" id="PF00919">
    <property type="entry name" value="UPF0004"/>
    <property type="match status" value="1"/>
</dbReference>
<dbReference type="SFLD" id="SFLDF00273">
    <property type="entry name" value="(dimethylallyl)adenosine_tRNA"/>
    <property type="match status" value="1"/>
</dbReference>
<dbReference type="SFLD" id="SFLDG01082">
    <property type="entry name" value="B12-binding_domain_containing"/>
    <property type="match status" value="1"/>
</dbReference>
<dbReference type="SFLD" id="SFLDG01061">
    <property type="entry name" value="methylthiotransferase"/>
    <property type="match status" value="1"/>
</dbReference>
<dbReference type="SMART" id="SM00729">
    <property type="entry name" value="Elp3"/>
    <property type="match status" value="1"/>
</dbReference>
<dbReference type="SUPFAM" id="SSF102114">
    <property type="entry name" value="Radical SAM enzymes"/>
    <property type="match status" value="1"/>
</dbReference>
<dbReference type="PROSITE" id="PS51449">
    <property type="entry name" value="MTTASE_N"/>
    <property type="match status" value="1"/>
</dbReference>
<dbReference type="PROSITE" id="PS01278">
    <property type="entry name" value="MTTASE_RADICAL"/>
    <property type="match status" value="1"/>
</dbReference>
<dbReference type="PROSITE" id="PS51918">
    <property type="entry name" value="RADICAL_SAM"/>
    <property type="match status" value="1"/>
</dbReference>
<dbReference type="PROSITE" id="PS50926">
    <property type="entry name" value="TRAM"/>
    <property type="match status" value="1"/>
</dbReference>